<comment type="function">
    <text evidence="1">Bifunctional enzyme that catalyzes the formation of 4-diphosphocytidyl-2-C-methyl-D-erythritol from CTP and 2-C-methyl-D-erythritol 4-phosphate (MEP) (IspD), and catalyzes the conversion of 4-diphosphocytidyl-2-C-methyl-D-erythritol 2-phosphate (CDP-ME2P) to 2-C-methyl-D-erythritol 2,4-cyclodiphosphate (ME-CPP) with a corresponding release of cytidine 5-monophosphate (CMP) (IspF).</text>
</comment>
<comment type="catalytic activity">
    <reaction evidence="1">
        <text>2-C-methyl-D-erythritol 4-phosphate + CTP + H(+) = 4-CDP-2-C-methyl-D-erythritol + diphosphate</text>
        <dbReference type="Rhea" id="RHEA:13429"/>
        <dbReference type="ChEBI" id="CHEBI:15378"/>
        <dbReference type="ChEBI" id="CHEBI:33019"/>
        <dbReference type="ChEBI" id="CHEBI:37563"/>
        <dbReference type="ChEBI" id="CHEBI:57823"/>
        <dbReference type="ChEBI" id="CHEBI:58262"/>
        <dbReference type="EC" id="2.7.7.60"/>
    </reaction>
</comment>
<comment type="catalytic activity">
    <reaction evidence="1">
        <text>4-CDP-2-C-methyl-D-erythritol 2-phosphate = 2-C-methyl-D-erythritol 2,4-cyclic diphosphate + CMP</text>
        <dbReference type="Rhea" id="RHEA:23864"/>
        <dbReference type="ChEBI" id="CHEBI:57919"/>
        <dbReference type="ChEBI" id="CHEBI:58483"/>
        <dbReference type="ChEBI" id="CHEBI:60377"/>
        <dbReference type="EC" id="4.6.1.12"/>
    </reaction>
</comment>
<comment type="cofactor">
    <cofactor evidence="1">
        <name>a divalent metal cation</name>
        <dbReference type="ChEBI" id="CHEBI:60240"/>
    </cofactor>
</comment>
<comment type="pathway">
    <text evidence="1">Isoprenoid biosynthesis; isopentenyl diphosphate biosynthesis via DXP pathway; isopentenyl diphosphate from 1-deoxy-D-xylulose 5-phosphate: step 2/6.</text>
</comment>
<comment type="pathway">
    <text evidence="1">Isoprenoid biosynthesis; isopentenyl diphosphate biosynthesis via DXP pathway; isopentenyl diphosphate from 1-deoxy-D-xylulose 5-phosphate: step 4/6.</text>
</comment>
<comment type="similarity">
    <text evidence="1">In the N-terminal section; belongs to the IspD/TarI cytidylyltransferase family. IspD subfamily.</text>
</comment>
<comment type="similarity">
    <text evidence="1">In the C-terminal section; belongs to the IspF family.</text>
</comment>
<gene>
    <name evidence="1" type="primary">ispDF</name>
    <name type="ordered locus">SUN_0522</name>
</gene>
<keyword id="KW-0414">Isoprene biosynthesis</keyword>
<keyword id="KW-0456">Lyase</keyword>
<keyword id="KW-0479">Metal-binding</keyword>
<keyword id="KW-0511">Multifunctional enzyme</keyword>
<keyword id="KW-0548">Nucleotidyltransferase</keyword>
<keyword id="KW-0808">Transferase</keyword>
<accession>A6Q7M3</accession>
<evidence type="ECO:0000255" key="1">
    <source>
        <dbReference type="HAMAP-Rule" id="MF_01520"/>
    </source>
</evidence>
<feature type="chain" id="PRO_1000068628" description="Bifunctional enzyme IspD/IspF">
    <location>
        <begin position="1"/>
        <end position="373"/>
    </location>
</feature>
<feature type="region of interest" description="2-C-methyl-D-erythritol 4-phosphate cytidylyltransferase" evidence="1">
    <location>
        <begin position="1"/>
        <end position="212"/>
    </location>
</feature>
<feature type="region of interest" description="2-C-methyl-D-erythritol 2,4-cyclodiphosphate synthase" evidence="1">
    <location>
        <begin position="213"/>
        <end position="373"/>
    </location>
</feature>
<feature type="binding site" evidence="1">
    <location>
        <begin position="219"/>
        <end position="221"/>
    </location>
    <ligand>
        <name>4-CDP-2-C-methyl-D-erythritol 2-phosphate</name>
        <dbReference type="ChEBI" id="CHEBI:57919"/>
    </ligand>
</feature>
<feature type="binding site" evidence="1">
    <location>
        <position position="219"/>
    </location>
    <ligand>
        <name>a divalent metal cation</name>
        <dbReference type="ChEBI" id="CHEBI:60240"/>
    </ligand>
</feature>
<feature type="binding site" evidence="1">
    <location>
        <position position="221"/>
    </location>
    <ligand>
        <name>a divalent metal cation</name>
        <dbReference type="ChEBI" id="CHEBI:60240"/>
    </ligand>
</feature>
<feature type="binding site" evidence="1">
    <location>
        <begin position="245"/>
        <end position="246"/>
    </location>
    <ligand>
        <name>4-CDP-2-C-methyl-D-erythritol 2-phosphate</name>
        <dbReference type="ChEBI" id="CHEBI:57919"/>
    </ligand>
</feature>
<feature type="binding site" evidence="1">
    <location>
        <position position="253"/>
    </location>
    <ligand>
        <name>a divalent metal cation</name>
        <dbReference type="ChEBI" id="CHEBI:60240"/>
    </ligand>
</feature>
<feature type="binding site" evidence="1">
    <location>
        <begin position="267"/>
        <end position="269"/>
    </location>
    <ligand>
        <name>4-CDP-2-C-methyl-D-erythritol 2-phosphate</name>
        <dbReference type="ChEBI" id="CHEBI:57919"/>
    </ligand>
</feature>
<feature type="binding site" evidence="1">
    <location>
        <begin position="272"/>
        <end position="276"/>
    </location>
    <ligand>
        <name>4-CDP-2-C-methyl-D-erythritol 2-phosphate</name>
        <dbReference type="ChEBI" id="CHEBI:57919"/>
    </ligand>
</feature>
<feature type="binding site" evidence="1">
    <location>
        <begin position="343"/>
        <end position="346"/>
    </location>
    <ligand>
        <name>4-CDP-2-C-methyl-D-erythritol 2-phosphate</name>
        <dbReference type="ChEBI" id="CHEBI:57919"/>
    </ligand>
</feature>
<feature type="binding site" evidence="1">
    <location>
        <position position="350"/>
    </location>
    <ligand>
        <name>4-CDP-2-C-methyl-D-erythritol 2-phosphate</name>
        <dbReference type="ChEBI" id="CHEBI:57919"/>
    </ligand>
</feature>
<feature type="binding site" evidence="1">
    <location>
        <position position="353"/>
    </location>
    <ligand>
        <name>4-CDP-2-C-methyl-D-erythritol 2-phosphate</name>
        <dbReference type="ChEBI" id="CHEBI:57919"/>
    </ligand>
</feature>
<feature type="site" description="Transition state stabilizer" evidence="1">
    <location>
        <position position="16"/>
    </location>
</feature>
<feature type="site" description="Transition state stabilizer" evidence="1">
    <location>
        <position position="23"/>
    </location>
</feature>
<feature type="site" description="Positions MEP for the nucleophilic attack" evidence="1">
    <location>
        <position position="140"/>
    </location>
</feature>
<feature type="site" description="Positions MEP for the nucleophilic attack" evidence="1">
    <location>
        <position position="192"/>
    </location>
</feature>
<feature type="site" description="Transition state stabilizer" evidence="1">
    <location>
        <position position="245"/>
    </location>
</feature>
<feature type="site" description="Transition state stabilizer" evidence="1">
    <location>
        <position position="344"/>
    </location>
</feature>
<name>ISPDF_SULNB</name>
<organism>
    <name type="scientific">Sulfurovum sp. (strain NBC37-1)</name>
    <dbReference type="NCBI Taxonomy" id="387093"/>
    <lineage>
        <taxon>Bacteria</taxon>
        <taxon>Pseudomonadati</taxon>
        <taxon>Campylobacterota</taxon>
        <taxon>Epsilonproteobacteria</taxon>
        <taxon>Campylobacterales</taxon>
        <taxon>Sulfurovaceae</taxon>
        <taxon>Sulfurovum</taxon>
    </lineage>
</organism>
<proteinExistence type="inferred from homology"/>
<sequence length="373" mass="40807">MPDITLILLGAGNSTRFESDVKKQWLYSGEIPLWLHVAESFEAMGAFAKIVIVSSPEDIGLMKHFADYTYVQGGETRQASLKNALEDVTTEYVLVSDIARCCVPAAMIHRILDAREEASCIVPVLPVTDTLYLAQTPLDREQVRIIQTPQLSVTKTLKQALQTDQLFTDDSSAVASMGKKVHFVEGSHEAHKLTTISDLKKLPCIEAPSGKTLTGFGLDIHPFEEGKAMVLCGVKIAVDYGFKAHSDGDVAIHALIDALLGAAGMGDIGELYPDTDQSYAGANSTRLLSDTVRKIRTHGYTIGNVDMTILAQAPRLLPYKEKMKHSIASLLEIRPHLVNIKATTAEKLGFVGRKEGVTVHAVANLTYYNWKQK</sequence>
<reference key="1">
    <citation type="journal article" date="2007" name="Proc. Natl. Acad. Sci. U.S.A.">
        <title>Deep-sea vent epsilon-proteobacterial genomes provide insights into emergence of pathogens.</title>
        <authorList>
            <person name="Nakagawa S."/>
            <person name="Takaki Y."/>
            <person name="Shimamura S."/>
            <person name="Reysenbach A.-L."/>
            <person name="Takai K."/>
            <person name="Horikoshi K."/>
        </authorList>
    </citation>
    <scope>NUCLEOTIDE SEQUENCE [LARGE SCALE GENOMIC DNA]</scope>
    <source>
        <strain>NBC37-1</strain>
    </source>
</reference>
<protein>
    <recommendedName>
        <fullName evidence="1">Bifunctional enzyme IspD/IspF</fullName>
    </recommendedName>
    <domain>
        <recommendedName>
            <fullName evidence="1">2-C-methyl-D-erythritol 4-phosphate cytidylyltransferase</fullName>
            <ecNumber evidence="1">2.7.7.60</ecNumber>
        </recommendedName>
        <alternativeName>
            <fullName evidence="1">4-diphosphocytidyl-2C-methyl-D-erythritol synthase</fullName>
        </alternativeName>
        <alternativeName>
            <fullName evidence="1">MEP cytidylyltransferase</fullName>
            <shortName evidence="1">MCT</shortName>
        </alternativeName>
    </domain>
    <domain>
        <recommendedName>
            <fullName evidence="1">2-C-methyl-D-erythritol 2,4-cyclodiphosphate synthase</fullName>
            <shortName evidence="1">MECDP-synthase</shortName>
            <shortName evidence="1">MECPP-synthase</shortName>
            <shortName evidence="1">MECPS</shortName>
            <ecNumber evidence="1">4.6.1.12</ecNumber>
        </recommendedName>
    </domain>
</protein>
<dbReference type="EC" id="2.7.7.60" evidence="1"/>
<dbReference type="EC" id="4.6.1.12" evidence="1"/>
<dbReference type="EMBL" id="AP009179">
    <property type="protein sequence ID" value="BAF71482.1"/>
    <property type="molecule type" value="Genomic_DNA"/>
</dbReference>
<dbReference type="RefSeq" id="WP_011980215.1">
    <property type="nucleotide sequence ID" value="NC_009663.1"/>
</dbReference>
<dbReference type="SMR" id="A6Q7M3"/>
<dbReference type="STRING" id="387093.SUN_0522"/>
<dbReference type="KEGG" id="sun:SUN_0522"/>
<dbReference type="eggNOG" id="COG0245">
    <property type="taxonomic scope" value="Bacteria"/>
</dbReference>
<dbReference type="eggNOG" id="COG1211">
    <property type="taxonomic scope" value="Bacteria"/>
</dbReference>
<dbReference type="HOGENOM" id="CLU_042800_2_6_7"/>
<dbReference type="OrthoDB" id="9804336at2"/>
<dbReference type="UniPathway" id="UPA00056">
    <property type="reaction ID" value="UER00093"/>
</dbReference>
<dbReference type="UniPathway" id="UPA00056">
    <property type="reaction ID" value="UER00095"/>
</dbReference>
<dbReference type="Proteomes" id="UP000006378">
    <property type="component" value="Chromosome"/>
</dbReference>
<dbReference type="GO" id="GO:0008685">
    <property type="term" value="F:2-C-methyl-D-erythritol 2,4-cyclodiphosphate synthase activity"/>
    <property type="evidence" value="ECO:0007669"/>
    <property type="project" value="UniProtKB-UniRule"/>
</dbReference>
<dbReference type="GO" id="GO:0050518">
    <property type="term" value="F:2-C-methyl-D-erythritol 4-phosphate cytidylyltransferase activity"/>
    <property type="evidence" value="ECO:0007669"/>
    <property type="project" value="UniProtKB-UniRule"/>
</dbReference>
<dbReference type="GO" id="GO:0046872">
    <property type="term" value="F:metal ion binding"/>
    <property type="evidence" value="ECO:0007669"/>
    <property type="project" value="UniProtKB-KW"/>
</dbReference>
<dbReference type="GO" id="GO:0019288">
    <property type="term" value="P:isopentenyl diphosphate biosynthetic process, methylerythritol 4-phosphate pathway"/>
    <property type="evidence" value="ECO:0007669"/>
    <property type="project" value="UniProtKB-UniRule"/>
</dbReference>
<dbReference type="GO" id="GO:0016114">
    <property type="term" value="P:terpenoid biosynthetic process"/>
    <property type="evidence" value="ECO:0007669"/>
    <property type="project" value="InterPro"/>
</dbReference>
<dbReference type="CDD" id="cd02516">
    <property type="entry name" value="CDP-ME_synthetase"/>
    <property type="match status" value="1"/>
</dbReference>
<dbReference type="CDD" id="cd00554">
    <property type="entry name" value="MECDP_synthase"/>
    <property type="match status" value="1"/>
</dbReference>
<dbReference type="Gene3D" id="3.30.1330.50">
    <property type="entry name" value="2-C-methyl-D-erythritol 2,4-cyclodiphosphate synthase"/>
    <property type="match status" value="1"/>
</dbReference>
<dbReference type="Gene3D" id="3.90.550.10">
    <property type="entry name" value="Spore Coat Polysaccharide Biosynthesis Protein SpsA, Chain A"/>
    <property type="match status" value="1"/>
</dbReference>
<dbReference type="HAMAP" id="MF_01520">
    <property type="entry name" value="IspDF"/>
    <property type="match status" value="1"/>
</dbReference>
<dbReference type="HAMAP" id="MF_00107">
    <property type="entry name" value="IspF"/>
    <property type="match status" value="1"/>
</dbReference>
<dbReference type="InterPro" id="IPR001228">
    <property type="entry name" value="IspD"/>
</dbReference>
<dbReference type="InterPro" id="IPR026596">
    <property type="entry name" value="IspD/F"/>
</dbReference>
<dbReference type="InterPro" id="IPR034683">
    <property type="entry name" value="IspD/TarI"/>
</dbReference>
<dbReference type="InterPro" id="IPR003526">
    <property type="entry name" value="MECDP_synthase"/>
</dbReference>
<dbReference type="InterPro" id="IPR020555">
    <property type="entry name" value="MECDP_synthase_CS"/>
</dbReference>
<dbReference type="InterPro" id="IPR036571">
    <property type="entry name" value="MECDP_synthase_sf"/>
</dbReference>
<dbReference type="InterPro" id="IPR029044">
    <property type="entry name" value="Nucleotide-diphossugar_trans"/>
</dbReference>
<dbReference type="NCBIfam" id="TIGR00453">
    <property type="entry name" value="ispD"/>
    <property type="match status" value="1"/>
</dbReference>
<dbReference type="NCBIfam" id="TIGR00151">
    <property type="entry name" value="ispF"/>
    <property type="match status" value="1"/>
</dbReference>
<dbReference type="NCBIfam" id="NF006899">
    <property type="entry name" value="PRK09382.1"/>
    <property type="match status" value="1"/>
</dbReference>
<dbReference type="PANTHER" id="PTHR43181">
    <property type="entry name" value="2-C-METHYL-D-ERYTHRITOL 2,4-CYCLODIPHOSPHATE SYNTHASE, CHLOROPLASTIC"/>
    <property type="match status" value="1"/>
</dbReference>
<dbReference type="PANTHER" id="PTHR43181:SF1">
    <property type="entry name" value="2-C-METHYL-D-ERYTHRITOL 2,4-CYCLODIPHOSPHATE SYNTHASE, CHLOROPLASTIC"/>
    <property type="match status" value="1"/>
</dbReference>
<dbReference type="Pfam" id="PF01128">
    <property type="entry name" value="IspD"/>
    <property type="match status" value="1"/>
</dbReference>
<dbReference type="Pfam" id="PF02542">
    <property type="entry name" value="YgbB"/>
    <property type="match status" value="1"/>
</dbReference>
<dbReference type="SUPFAM" id="SSF69765">
    <property type="entry name" value="IpsF-like"/>
    <property type="match status" value="1"/>
</dbReference>
<dbReference type="SUPFAM" id="SSF53448">
    <property type="entry name" value="Nucleotide-diphospho-sugar transferases"/>
    <property type="match status" value="1"/>
</dbReference>
<dbReference type="PROSITE" id="PS01350">
    <property type="entry name" value="ISPF"/>
    <property type="match status" value="1"/>
</dbReference>